<organism evidence="9">
    <name type="scientific">Arabidopsis thaliana</name>
    <name type="common">Mouse-ear cress</name>
    <dbReference type="NCBI Taxonomy" id="3702"/>
    <lineage>
        <taxon>Eukaryota</taxon>
        <taxon>Viridiplantae</taxon>
        <taxon>Streptophyta</taxon>
        <taxon>Embryophyta</taxon>
        <taxon>Tracheophyta</taxon>
        <taxon>Spermatophyta</taxon>
        <taxon>Magnoliopsida</taxon>
        <taxon>eudicotyledons</taxon>
        <taxon>Gunneridae</taxon>
        <taxon>Pentapetalae</taxon>
        <taxon>rosids</taxon>
        <taxon>malvids</taxon>
        <taxon>Brassicales</taxon>
        <taxon>Brassicaceae</taxon>
        <taxon>Camelineae</taxon>
        <taxon>Arabidopsis</taxon>
    </lineage>
</organism>
<name>NU50B_ARATH</name>
<evidence type="ECO:0000250" key="1">
    <source>
        <dbReference type="UniProtKB" id="Q9C829"/>
    </source>
</evidence>
<evidence type="ECO:0000256" key="2">
    <source>
        <dbReference type="SAM" id="MobiDB-lite"/>
    </source>
</evidence>
<evidence type="ECO:0000269" key="3">
    <source>
    </source>
</evidence>
<evidence type="ECO:0000303" key="4">
    <source>
    </source>
</evidence>
<evidence type="ECO:0000305" key="5"/>
<evidence type="ECO:0000305" key="6">
    <source>
    </source>
</evidence>
<evidence type="ECO:0000312" key="7">
    <source>
        <dbReference type="Araport" id="AT3G15970"/>
    </source>
</evidence>
<evidence type="ECO:0000312" key="8">
    <source>
        <dbReference type="EMBL" id="BAB02663.1"/>
    </source>
</evidence>
<evidence type="ECO:0000312" key="9">
    <source>
        <dbReference type="Proteomes" id="UP000006548"/>
    </source>
</evidence>
<proteinExistence type="evidence at protein level"/>
<dbReference type="EMBL" id="AB012247">
    <property type="protein sequence ID" value="BAB02663.1"/>
    <property type="molecule type" value="Genomic_DNA"/>
</dbReference>
<dbReference type="EMBL" id="CP002686">
    <property type="protein sequence ID" value="AEE75754.1"/>
    <property type="molecule type" value="Genomic_DNA"/>
</dbReference>
<dbReference type="EMBL" id="CP002686">
    <property type="protein sequence ID" value="ANM64912.1"/>
    <property type="molecule type" value="Genomic_DNA"/>
</dbReference>
<dbReference type="EMBL" id="AY084443">
    <property type="protein sequence ID" value="AAM61016.1"/>
    <property type="molecule type" value="mRNA"/>
</dbReference>
<dbReference type="EMBL" id="AK118302">
    <property type="protein sequence ID" value="BAC42920.1"/>
    <property type="status" value="ALT_INIT"/>
    <property type="molecule type" value="mRNA"/>
</dbReference>
<dbReference type="RefSeq" id="NP_001326913.1">
    <property type="nucleotide sequence ID" value="NM_001338194.1"/>
</dbReference>
<dbReference type="RefSeq" id="NP_566532.1">
    <property type="nucleotide sequence ID" value="NM_112467.3"/>
</dbReference>
<dbReference type="SMR" id="Q9LW88"/>
<dbReference type="BioGRID" id="6175">
    <property type="interactions" value="2"/>
</dbReference>
<dbReference type="FunCoup" id="Q9LW88">
    <property type="interactions" value="2288"/>
</dbReference>
<dbReference type="IntAct" id="Q9LW88">
    <property type="interactions" value="1"/>
</dbReference>
<dbReference type="STRING" id="3702.Q9LW88"/>
<dbReference type="iPTMnet" id="Q9LW88"/>
<dbReference type="PaxDb" id="3702-AT3G15970.1"/>
<dbReference type="ProteomicsDB" id="248662"/>
<dbReference type="EnsemblPlants" id="AT3G15970.1">
    <property type="protein sequence ID" value="AT3G15970.1"/>
    <property type="gene ID" value="AT3G15970"/>
</dbReference>
<dbReference type="EnsemblPlants" id="AT3G15970.2">
    <property type="protein sequence ID" value="AT3G15970.2"/>
    <property type="gene ID" value="AT3G15970"/>
</dbReference>
<dbReference type="GeneID" id="820841"/>
<dbReference type="Gramene" id="AT3G15970.1">
    <property type="protein sequence ID" value="AT3G15970.1"/>
    <property type="gene ID" value="AT3G15970"/>
</dbReference>
<dbReference type="Gramene" id="AT3G15970.2">
    <property type="protein sequence ID" value="AT3G15970.2"/>
    <property type="gene ID" value="AT3G15970"/>
</dbReference>
<dbReference type="KEGG" id="ath:AT3G15970"/>
<dbReference type="Araport" id="AT3G15970"/>
<dbReference type="TAIR" id="AT3G15970"/>
<dbReference type="eggNOG" id="KOG0864">
    <property type="taxonomic scope" value="Eukaryota"/>
</dbReference>
<dbReference type="HOGENOM" id="CLU_050764_1_0_1"/>
<dbReference type="InParanoid" id="Q9LW88"/>
<dbReference type="OMA" id="HSTGKNA"/>
<dbReference type="PhylomeDB" id="Q9LW88"/>
<dbReference type="PRO" id="PR:Q9LW88"/>
<dbReference type="Proteomes" id="UP000006548">
    <property type="component" value="Chromosome 3"/>
</dbReference>
<dbReference type="ExpressionAtlas" id="Q9LW88">
    <property type="expression patterns" value="baseline and differential"/>
</dbReference>
<dbReference type="GO" id="GO:0005643">
    <property type="term" value="C:nuclear pore"/>
    <property type="evidence" value="ECO:0007669"/>
    <property type="project" value="UniProtKB-SubCell"/>
</dbReference>
<dbReference type="GO" id="GO:0005654">
    <property type="term" value="C:nucleoplasm"/>
    <property type="evidence" value="ECO:0007669"/>
    <property type="project" value="UniProtKB-SubCell"/>
</dbReference>
<dbReference type="GO" id="GO:0046907">
    <property type="term" value="P:intracellular transport"/>
    <property type="evidence" value="ECO:0007669"/>
    <property type="project" value="InterPro"/>
</dbReference>
<dbReference type="GO" id="GO:0051028">
    <property type="term" value="P:mRNA transport"/>
    <property type="evidence" value="ECO:0007669"/>
    <property type="project" value="UniProtKB-KW"/>
</dbReference>
<dbReference type="GO" id="GO:0015031">
    <property type="term" value="P:protein transport"/>
    <property type="evidence" value="ECO:0007669"/>
    <property type="project" value="UniProtKB-KW"/>
</dbReference>
<dbReference type="CDD" id="cd13169">
    <property type="entry name" value="RanBD_NUP50_plant"/>
    <property type="match status" value="1"/>
</dbReference>
<dbReference type="Gene3D" id="2.30.29.30">
    <property type="entry name" value="Pleckstrin-homology domain (PH domain)/Phosphotyrosine-binding domain (PTB)"/>
    <property type="match status" value="1"/>
</dbReference>
<dbReference type="InterPro" id="IPR015007">
    <property type="entry name" value="NUP2/50/61"/>
</dbReference>
<dbReference type="InterPro" id="IPR011993">
    <property type="entry name" value="PH-like_dom_sf"/>
</dbReference>
<dbReference type="InterPro" id="IPR000156">
    <property type="entry name" value="Ran_bind_dom"/>
</dbReference>
<dbReference type="InterPro" id="IPR045207">
    <property type="entry name" value="RanBD_NUP50_plant"/>
</dbReference>
<dbReference type="InterPro" id="IPR045255">
    <property type="entry name" value="RanBP1-like"/>
</dbReference>
<dbReference type="PANTHER" id="PTHR23138">
    <property type="entry name" value="RAN BINDING PROTEIN"/>
    <property type="match status" value="1"/>
</dbReference>
<dbReference type="PANTHER" id="PTHR23138:SF142">
    <property type="entry name" value="RAN-BINDING PROTEIN 3B-RELATED"/>
    <property type="match status" value="1"/>
</dbReference>
<dbReference type="Pfam" id="PF08911">
    <property type="entry name" value="NUP50"/>
    <property type="match status" value="1"/>
</dbReference>
<dbReference type="Pfam" id="PF00638">
    <property type="entry name" value="Ran_BP1"/>
    <property type="match status" value="1"/>
</dbReference>
<dbReference type="SMART" id="SM00160">
    <property type="entry name" value="RanBD"/>
    <property type="match status" value="1"/>
</dbReference>
<dbReference type="SUPFAM" id="SSF50729">
    <property type="entry name" value="PH domain-like"/>
    <property type="match status" value="1"/>
</dbReference>
<dbReference type="PROSITE" id="PS50196">
    <property type="entry name" value="RANBD1"/>
    <property type="match status" value="1"/>
</dbReference>
<feature type="initiator methionine" description="Removed" evidence="1">
    <location>
        <position position="1"/>
    </location>
</feature>
<feature type="chain" id="PRO_0000431081" description="Nuclear pore complex protein NUP50B">
    <location>
        <begin position="2"/>
        <end position="465"/>
    </location>
</feature>
<feature type="repeat" description="1">
    <location>
        <begin position="266"/>
        <end position="267"/>
    </location>
</feature>
<feature type="repeat" description="2">
    <location>
        <begin position="286"/>
        <end position="287"/>
    </location>
</feature>
<feature type="repeat" description="3">
    <location>
        <begin position="297"/>
        <end position="298"/>
    </location>
</feature>
<feature type="region of interest" description="Disordered" evidence="2">
    <location>
        <begin position="1"/>
        <end position="44"/>
    </location>
</feature>
<feature type="region of interest" description="Disordered" evidence="2">
    <location>
        <begin position="59"/>
        <end position="244"/>
    </location>
</feature>
<feature type="region of interest" description="3 X 2 AA repeats of F-G">
    <location>
        <begin position="266"/>
        <end position="298"/>
    </location>
</feature>
<feature type="region of interest" description="Disordered" evidence="2">
    <location>
        <begin position="308"/>
        <end position="330"/>
    </location>
</feature>
<feature type="region of interest" description="Disordered" evidence="2">
    <location>
        <begin position="439"/>
        <end position="465"/>
    </location>
</feature>
<feature type="compositionally biased region" description="Acidic residues" evidence="2">
    <location>
        <begin position="26"/>
        <end position="35"/>
    </location>
</feature>
<feature type="compositionally biased region" description="Low complexity" evidence="2">
    <location>
        <begin position="81"/>
        <end position="97"/>
    </location>
</feature>
<feature type="compositionally biased region" description="Basic and acidic residues" evidence="2">
    <location>
        <begin position="105"/>
        <end position="127"/>
    </location>
</feature>
<feature type="compositionally biased region" description="Basic and acidic residues" evidence="2">
    <location>
        <begin position="141"/>
        <end position="157"/>
    </location>
</feature>
<feature type="compositionally biased region" description="Basic and acidic residues" evidence="2">
    <location>
        <begin position="216"/>
        <end position="233"/>
    </location>
</feature>
<feature type="compositionally biased region" description="Polar residues" evidence="2">
    <location>
        <begin position="456"/>
        <end position="465"/>
    </location>
</feature>
<feature type="modified residue" description="N-acetylglycine" evidence="1">
    <location>
        <position position="2"/>
    </location>
</feature>
<feature type="modified residue" description="Phosphoserine" evidence="1">
    <location>
        <position position="125"/>
    </location>
</feature>
<feature type="modified residue" description="Phosphothreonine" evidence="1">
    <location>
        <position position="455"/>
    </location>
</feature>
<feature type="modified residue" description="Phosphoserine" evidence="1">
    <location>
        <position position="459"/>
    </location>
</feature>
<feature type="sequence conflict" description="In Ref. 3; AAM61016." ref="3">
    <original>G</original>
    <variation>C</variation>
    <location>
        <position position="223"/>
    </location>
</feature>
<feature type="sequence conflict" description="In Ref. 3; AAM61016." ref="3">
    <original>T</original>
    <variation>I</variation>
    <location>
        <position position="382"/>
    </location>
</feature>
<protein>
    <recommendedName>
        <fullName evidence="4">Nuclear pore complex protein NUP50B</fullName>
    </recommendedName>
    <alternativeName>
        <fullName>Nucleoporin 50B</fullName>
    </alternativeName>
</protein>
<accession>Q9LW88</accession>
<accession>Q8GXC8</accession>
<accession>Q8LG62</accession>
<comment type="function">
    <text evidence="6">Probably involved in nucleocytoplasmic transport via its interactions with importins and Ran, rather than by forming part of the nuclear pore complex (NPC) scaffolding.</text>
</comment>
<comment type="subunit">
    <text evidence="6">Part of the nuclear pore complex (NPC). The NPC has an eight-fold symmetrical structure comprising a central transport channel and two rings, the cytoplasmic and nuclear rings, to which eight filaments are attached. The cytoplasmic filaments have loose ends, while the nuclear filaments are joined in a distal ring, forming a nuclear basket. NPCs are highly dynamic in configuration and composition, and can be devided in 3 subcomplexes, the NUP62 subcomplex, the NUP107-160 subcomplex and the NUP93 subcomplex, containing approximately 30 different nucleoporin proteins.</text>
</comment>
<comment type="subcellular location">
    <subcellularLocation>
        <location evidence="3">Nucleus</location>
        <location evidence="3">Nucleoplasm</location>
    </subcellularLocation>
    <subcellularLocation>
        <location evidence="6">Nucleus</location>
        <location evidence="6">Nuclear pore complex</location>
    </subcellularLocation>
</comment>
<comment type="sequence caution" evidence="5">
    <conflict type="erroneous initiation">
        <sequence resource="EMBL-CDS" id="BAC42920"/>
    </conflict>
    <text>Truncated N-terminus.</text>
</comment>
<keyword id="KW-0007">Acetylation</keyword>
<keyword id="KW-0509">mRNA transport</keyword>
<keyword id="KW-0906">Nuclear pore complex</keyword>
<keyword id="KW-0539">Nucleus</keyword>
<keyword id="KW-0597">Phosphoprotein</keyword>
<keyword id="KW-0653">Protein transport</keyword>
<keyword id="KW-1185">Reference proteome</keyword>
<keyword id="KW-0677">Repeat</keyword>
<keyword id="KW-0811">Translocation</keyword>
<keyword id="KW-0813">Transport</keyword>
<sequence>MGDSDNAIPFSRKRTALKELSRDNPGLDDDDEDTSALESGTFNTASKEVLASRRIIRVRRTDRSATAPPASNPFTGIRLVPFTAPAPSTAAAETTKPLSAGKQETLADGRSDATKETDGDSKEKSDAIDAVGKQETQGDEISAKTKDIIDGGEKEMSEAVNSVEGGGAVNKNEDEIKTTMVTEVAAGEETVKDDNNNSNTVEGSDCVVKDTGGNQTEKEGKEGDGNEDTEKNGDSGALSSFHQHSSSKNAFTGLASTGFSASSFSFGLVPQEGSTGSGSEQSSFSFGQANNGNSSLFGASVATSITTKSTETTTAFPSKQDVSVETGEENEKAAFTADSVMFEYLEGGWKERGKGELKVNISTTENRKARLVMRSKGNYRLTLNASLYPEMKLAKMDKKGITFACVNSVSDAKDGLSTLALKFKDPTVVEEFRAVIEEHKDSKPSVAEAAAPLKTPENSPSAEDA</sequence>
<reference key="1">
    <citation type="journal article" date="2000" name="DNA Res.">
        <title>Structural analysis of Arabidopsis thaliana chromosome 3. I. Sequence features of the regions of 4,504,864 bp covered by sixty P1 and TAC clones.</title>
        <authorList>
            <person name="Sato S."/>
            <person name="Nakamura Y."/>
            <person name="Kaneko T."/>
            <person name="Katoh T."/>
            <person name="Asamizu E."/>
            <person name="Tabata S."/>
        </authorList>
    </citation>
    <scope>NUCLEOTIDE SEQUENCE [LARGE SCALE GENOMIC DNA]</scope>
    <source>
        <strain>cv. Columbia</strain>
    </source>
</reference>
<reference key="2">
    <citation type="journal article" date="2017" name="Plant J.">
        <title>Araport11: a complete reannotation of the Arabidopsis thaliana reference genome.</title>
        <authorList>
            <person name="Cheng C.Y."/>
            <person name="Krishnakumar V."/>
            <person name="Chan A.P."/>
            <person name="Thibaud-Nissen F."/>
            <person name="Schobel S."/>
            <person name="Town C.D."/>
        </authorList>
    </citation>
    <scope>GENOME REANNOTATION</scope>
    <source>
        <strain>cv. Columbia</strain>
    </source>
</reference>
<reference key="3">
    <citation type="submission" date="2002-03" db="EMBL/GenBank/DDBJ databases">
        <title>Full-length cDNA from Arabidopsis thaliana.</title>
        <authorList>
            <person name="Brover V.V."/>
            <person name="Troukhan M.E."/>
            <person name="Alexandrov N.A."/>
            <person name="Lu Y.-P."/>
            <person name="Flavell R.B."/>
            <person name="Feldmann K.A."/>
        </authorList>
    </citation>
    <scope>NUCLEOTIDE SEQUENCE [LARGE SCALE MRNA]</scope>
</reference>
<reference key="4">
    <citation type="journal article" date="2002" name="Science">
        <title>Functional annotation of a full-length Arabidopsis cDNA collection.</title>
        <authorList>
            <person name="Seki M."/>
            <person name="Narusaka M."/>
            <person name="Kamiya A."/>
            <person name="Ishida J."/>
            <person name="Satou M."/>
            <person name="Sakurai T."/>
            <person name="Nakajima M."/>
            <person name="Enju A."/>
            <person name="Akiyama K."/>
            <person name="Oono Y."/>
            <person name="Muramatsu M."/>
            <person name="Hayashizaki Y."/>
            <person name="Kawai J."/>
            <person name="Carninci P."/>
            <person name="Itoh M."/>
            <person name="Ishii Y."/>
            <person name="Arakawa T."/>
            <person name="Shibata K."/>
            <person name="Shinagawa A."/>
            <person name="Shinozaki K."/>
        </authorList>
    </citation>
    <scope>NUCLEOTIDE SEQUENCE [LARGE SCALE MRNA] OF 392-465</scope>
    <source>
        <strain>cv. Columbia</strain>
    </source>
</reference>
<reference key="5">
    <citation type="journal article" date="2010" name="Plant Cell">
        <title>Identification and characterization of nuclear pore complex components in Arabidopsis thaliana.</title>
        <authorList>
            <person name="Tamura K."/>
            <person name="Fukao Y."/>
            <person name="Iwamoto M."/>
            <person name="Haraguchi T."/>
            <person name="Hara-Nishimura I."/>
        </authorList>
    </citation>
    <scope>IDENTIFICATION IN THE NUCLEAR PORE COMPLEX</scope>
    <scope>SUBCELLULAR LOCATION</scope>
    <scope>FUNCTION</scope>
    <scope>NOMENCLATURE</scope>
</reference>
<gene>
    <name evidence="4" type="primary">NUP50B</name>
    <name evidence="7" type="ordered locus">At3g15970</name>
    <name evidence="8" type="ORF">MSL1.1</name>
</gene>